<feature type="chain" id="PRO_0000299550" description="Probable thioesterase PNKD">
    <location>
        <begin position="1"/>
        <end position="385"/>
    </location>
</feature>
<feature type="region of interest" description="Disordered" evidence="4">
    <location>
        <begin position="32"/>
        <end position="56"/>
    </location>
</feature>
<feature type="compositionally biased region" description="Polar residues" evidence="4">
    <location>
        <begin position="32"/>
        <end position="42"/>
    </location>
</feature>
<feature type="binding site" evidence="2">
    <location>
        <position position="172"/>
    </location>
    <ligand>
        <name>Zn(2+)</name>
        <dbReference type="ChEBI" id="CHEBI:29105"/>
        <label>1</label>
    </ligand>
</feature>
<feature type="binding site" evidence="2">
    <location>
        <position position="174"/>
    </location>
    <ligand>
        <name>Zn(2+)</name>
        <dbReference type="ChEBI" id="CHEBI:29105"/>
        <label>1</label>
    </ligand>
</feature>
<feature type="binding site" evidence="2">
    <location>
        <position position="176"/>
    </location>
    <ligand>
        <name>Zn(2+)</name>
        <dbReference type="ChEBI" id="CHEBI:29105"/>
        <label>2</label>
    </ligand>
</feature>
<feature type="binding site" evidence="2">
    <location>
        <position position="177"/>
    </location>
    <ligand>
        <name>Zn(2+)</name>
        <dbReference type="ChEBI" id="CHEBI:29105"/>
        <label>2</label>
    </ligand>
</feature>
<feature type="binding site" evidence="2">
    <location>
        <position position="229"/>
    </location>
    <ligand>
        <name>Zn(2+)</name>
        <dbReference type="ChEBI" id="CHEBI:29105"/>
        <label>1</label>
    </ligand>
</feature>
<feature type="binding site" evidence="2">
    <location>
        <position position="253"/>
    </location>
    <ligand>
        <name>Zn(2+)</name>
        <dbReference type="ChEBI" id="CHEBI:29105"/>
        <label>1</label>
    </ligand>
</feature>
<feature type="binding site" evidence="2">
    <location>
        <position position="253"/>
    </location>
    <ligand>
        <name>Zn(2+)</name>
        <dbReference type="ChEBI" id="CHEBI:29105"/>
        <label>2</label>
    </ligand>
</feature>
<feature type="binding site" evidence="2">
    <location>
        <position position="291"/>
    </location>
    <ligand>
        <name>Zn(2+)</name>
        <dbReference type="ChEBI" id="CHEBI:29105"/>
        <label>2</label>
    </ligand>
</feature>
<feature type="splice variant" id="VSP_027741" description="In isoform 4." evidence="10">
    <original>MAAVVAATALKGRGARNARVLRGILSGATANKASQNRTRALQSHSSPECKEEPEPLSPELEYIPRKRGKNPMKAVGLAW</original>
    <variation>MAWQGWLAPWLWVSGCWLLFFAFVLLLSPRSCQEQRGFRGLLMTRSQRLLFRIG</variation>
    <location>
        <begin position="1"/>
        <end position="79"/>
    </location>
</feature>
<feature type="splice variant" id="VSP_027742" description="In isoform 3." evidence="8">
    <original>W</original>
    <variation>WAIGFPCGILFFVLTKQEVDKDRLKQMKARQNMRVSNTGE</variation>
    <location>
        <position position="79"/>
    </location>
</feature>
<feature type="splice variant" id="VSP_027743" description="In isoform 2." evidence="7 8 9 11 12">
    <original>YSLYTRTWLGYLFYRQQLRRARNRYPKGHSKTQPRLFNGVKVLPIPVLSDNYSYLIIDTQAGL</original>
    <variation>AIGFPCGILFFVLTKQEVDKDRLKQMKARQNMRVSNTGEYESQRYRASPQQAQFPEVGSGAQT</variation>
    <location>
        <begin position="80"/>
        <end position="142"/>
    </location>
</feature>
<feature type="splice variant" id="VSP_027744" description="In isoform 2." evidence="7 8 9 11 12">
    <location>
        <begin position="143"/>
        <end position="385"/>
    </location>
</feature>
<feature type="sequence conflict" description="In Ref. 3; AAL25717." evidence="13" ref="3">
    <original>N</original>
    <variation>H</variation>
    <location>
        <position position="17"/>
    </location>
</feature>
<feature type="modified residue" description="Phosphoserine" evidence="1">
    <location sequence="Q69ZP3-2">
        <position position="121"/>
    </location>
</feature>
<comment type="function">
    <text evidence="3">Probable thioesterase that may play a role in cellular detoxification processes; it likely acts on a yet-unknown alpha-hydroxythioester substrate. In vitro, it is able to catalyze the hydrolysis of S-D-lactoyl-glutathione to form glutathione and D-lactic acid at very low rate, though this reaction is not physiologically relevant in vivo.</text>
</comment>
<comment type="catalytic activity">
    <reaction evidence="3">
        <text>a thioester + H2O = a thiol + a carboxylate + H(+)</text>
        <dbReference type="Rhea" id="RHEA:82919"/>
        <dbReference type="ChEBI" id="CHEBI:15377"/>
        <dbReference type="ChEBI" id="CHEBI:15378"/>
        <dbReference type="ChEBI" id="CHEBI:29067"/>
        <dbReference type="ChEBI" id="CHEBI:29256"/>
        <dbReference type="ChEBI" id="CHEBI:51277"/>
    </reaction>
</comment>
<comment type="cofactor">
    <cofactor evidence="2">
        <name>Zn(2+)</name>
        <dbReference type="ChEBI" id="CHEBI:29105"/>
    </cofactor>
    <text evidence="2">Binds 2 Zn(2+) ions per subunit.</text>
</comment>
<comment type="subunit">
    <text evidence="1">Isoform 2 interacts with the sarcomeric proteins, MRLC2, MYOM1 and ENO3.</text>
</comment>
<comment type="subcellular location">
    <molecule>Isoform 1</molecule>
    <subcellularLocation>
        <location evidence="3">Cell membrane</location>
        <topology evidence="3">Peripheral membrane protein</topology>
    </subcellularLocation>
    <subcellularLocation>
        <location evidence="3">Mitochondrion</location>
    </subcellularLocation>
</comment>
<comment type="subcellular location">
    <molecule>Isoform 2</molecule>
    <subcellularLocation>
        <location evidence="3">Cytoplasm</location>
    </subcellularLocation>
    <subcellularLocation>
        <location evidence="3">Mitochondrion</location>
    </subcellularLocation>
</comment>
<comment type="alternative products">
    <event type="alternative splicing"/>
    <isoform>
        <id>Q69ZP3-1</id>
        <name>1</name>
        <sequence type="displayed"/>
    </isoform>
    <isoform>
        <id>Q69ZP3-2</id>
        <name>2</name>
        <sequence type="described" ref="VSP_027743 VSP_027744"/>
    </isoform>
    <isoform>
        <id>Q69ZP3-3</id>
        <name>3</name>
        <sequence type="described" ref="VSP_027742"/>
    </isoform>
    <isoform>
        <id>Q69ZP3-4</id>
        <name>4</name>
        <sequence type="described" ref="VSP_027741"/>
    </isoform>
</comment>
<comment type="tissue specificity">
    <text evidence="6">Expressed in many discrete areas of the brain.</text>
</comment>
<comment type="induction">
    <text evidence="5">By Hepatitis C virus core protein.</text>
</comment>
<comment type="PTM">
    <text evidence="3">Undergoes cleavage at the N-terminus.</text>
</comment>
<comment type="miscellaneous">
    <text>Mice overexpressing Pnkd infused with angiotensin II develop greater cardiac hypertrophy as well as increased cardiac inflammation and fibrosis, compared with angiotensin II-infused normal mice. In these mice, Pnkd overexpression promote nuclear factor kappa B activation.</text>
</comment>
<comment type="similarity">
    <text evidence="13">Belongs to the metallo-beta-lactamase superfamily. Glyoxalase II family.</text>
</comment>
<comment type="sequence caution" evidence="13">
    <conflict type="erroneous initiation">
        <sequence resource="EMBL-CDS" id="BAC30873"/>
    </conflict>
</comment>
<comment type="sequence caution" evidence="13">
    <conflict type="erroneous initiation">
        <sequence resource="EMBL-CDS" id="BAD32403"/>
    </conflict>
</comment>
<name>PNKD_MOUSE</name>
<gene>
    <name type="primary">Pnkd</name>
    <name type="synonym">Brp17</name>
    <name type="synonym">Kiaa1184</name>
    <name type="synonym">Mr1</name>
    <name type="synonym">Tahccp2</name>
    <name type="ORF">Fksg19</name>
    <name type="ORF">MNCb-5687</name>
</gene>
<keyword id="KW-0025">Alternative splicing</keyword>
<keyword id="KW-1003">Cell membrane</keyword>
<keyword id="KW-0963">Cytoplasm</keyword>
<keyword id="KW-0378">Hydrolase</keyword>
<keyword id="KW-0472">Membrane</keyword>
<keyword id="KW-0479">Metal-binding</keyword>
<keyword id="KW-0496">Mitochondrion</keyword>
<keyword id="KW-0597">Phosphoprotein</keyword>
<keyword id="KW-1185">Reference proteome</keyword>
<keyword id="KW-0862">Zinc</keyword>
<dbReference type="EC" id="3.1.2.-" evidence="3"/>
<dbReference type="EMBL" id="AY039041">
    <property type="protein sequence ID" value="AAK83447.1"/>
    <property type="molecule type" value="mRNA"/>
</dbReference>
<dbReference type="EMBL" id="AY039042">
    <property type="protein sequence ID" value="AAK83448.1"/>
    <property type="molecule type" value="Genomic_DNA"/>
</dbReference>
<dbReference type="EMBL" id="AB041609">
    <property type="protein sequence ID" value="BAA95092.1"/>
    <property type="molecule type" value="mRNA"/>
</dbReference>
<dbReference type="EMBL" id="AF318058">
    <property type="protein sequence ID" value="AAL25717.1"/>
    <property type="molecule type" value="mRNA"/>
</dbReference>
<dbReference type="EMBL" id="AY299972">
    <property type="protein sequence ID" value="AAP58373.1"/>
    <property type="molecule type" value="mRNA"/>
</dbReference>
<dbReference type="EMBL" id="AK173125">
    <property type="protein sequence ID" value="BAD32403.1"/>
    <property type="status" value="ALT_INIT"/>
    <property type="molecule type" value="mRNA"/>
</dbReference>
<dbReference type="EMBL" id="AK009545">
    <property type="protein sequence ID" value="BAB26351.1"/>
    <property type="molecule type" value="mRNA"/>
</dbReference>
<dbReference type="EMBL" id="AK012976">
    <property type="protein sequence ID" value="BAB28577.2"/>
    <property type="molecule type" value="mRNA"/>
</dbReference>
<dbReference type="EMBL" id="AK041238">
    <property type="protein sequence ID" value="BAC30873.1"/>
    <property type="status" value="ALT_INIT"/>
    <property type="molecule type" value="mRNA"/>
</dbReference>
<dbReference type="EMBL" id="AK166548">
    <property type="protein sequence ID" value="BAE38846.1"/>
    <property type="molecule type" value="mRNA"/>
</dbReference>
<dbReference type="EMBL" id="BC008274">
    <property type="protein sequence ID" value="AAH08274.1"/>
    <property type="molecule type" value="mRNA"/>
</dbReference>
<dbReference type="EMBL" id="BC058945">
    <property type="protein sequence ID" value="AAH58945.1"/>
    <property type="molecule type" value="mRNA"/>
</dbReference>
<dbReference type="EMBL" id="BC116236">
    <property type="protein sequence ID" value="AAI16237.1"/>
    <property type="molecule type" value="mRNA"/>
</dbReference>
<dbReference type="EMBL" id="BC116237">
    <property type="protein sequence ID" value="AAI16238.1"/>
    <property type="molecule type" value="mRNA"/>
</dbReference>
<dbReference type="CCDS" id="CCDS15045.1">
    <molecule id="Q69ZP3-4"/>
</dbReference>
<dbReference type="CCDS" id="CCDS35613.1">
    <molecule id="Q69ZP3-1"/>
</dbReference>
<dbReference type="CCDS" id="CCDS35614.1">
    <molecule id="Q69ZP3-2"/>
</dbReference>
<dbReference type="RefSeq" id="NP_001034598.1">
    <molecule id="Q69ZP3-1"/>
    <property type="nucleotide sequence ID" value="NM_001039509.1"/>
</dbReference>
<dbReference type="RefSeq" id="NP_064383.1">
    <molecule id="Q69ZP3-4"/>
    <property type="nucleotide sequence ID" value="NM_019999.2"/>
</dbReference>
<dbReference type="RefSeq" id="NP_079856.2">
    <property type="nucleotide sequence ID" value="NM_025580.2"/>
</dbReference>
<dbReference type="SMR" id="Q69ZP3"/>
<dbReference type="FunCoup" id="Q69ZP3">
    <property type="interactions" value="93"/>
</dbReference>
<dbReference type="STRING" id="10090.ENSMUSP00000027370"/>
<dbReference type="GlyGen" id="Q69ZP3">
    <property type="glycosylation" value="2 sites"/>
</dbReference>
<dbReference type="iPTMnet" id="Q69ZP3"/>
<dbReference type="PhosphoSitePlus" id="Q69ZP3"/>
<dbReference type="SwissPalm" id="Q69ZP3"/>
<dbReference type="jPOST" id="Q69ZP3"/>
<dbReference type="PaxDb" id="10090-ENSMUSP00000027370"/>
<dbReference type="PeptideAtlas" id="Q69ZP3"/>
<dbReference type="ProteomicsDB" id="289705">
    <molecule id="Q69ZP3-1"/>
</dbReference>
<dbReference type="ProteomicsDB" id="289706">
    <molecule id="Q69ZP3-2"/>
</dbReference>
<dbReference type="ProteomicsDB" id="289707">
    <molecule id="Q69ZP3-3"/>
</dbReference>
<dbReference type="ProteomicsDB" id="289708">
    <molecule id="Q69ZP3-4"/>
</dbReference>
<dbReference type="Pumba" id="Q69ZP3"/>
<dbReference type="Antibodypedia" id="2431">
    <property type="antibodies" value="131 antibodies from 25 providers"/>
</dbReference>
<dbReference type="DNASU" id="56695"/>
<dbReference type="Ensembl" id="ENSMUST00000027370.13">
    <molecule id="Q69ZP3-1"/>
    <property type="protein sequence ID" value="ENSMUSP00000027370.7"/>
    <property type="gene ID" value="ENSMUSG00000026179.15"/>
</dbReference>
<dbReference type="Ensembl" id="ENSMUST00000087225.6">
    <molecule id="Q69ZP3-4"/>
    <property type="protein sequence ID" value="ENSMUSP00000084477.6"/>
    <property type="gene ID" value="ENSMUSG00000026179.15"/>
</dbReference>
<dbReference type="Ensembl" id="ENSMUST00000087226.11">
    <molecule id="Q69ZP3-3"/>
    <property type="protein sequence ID" value="ENSMUSP00000084478.5"/>
    <property type="gene ID" value="ENSMUSG00000026179.15"/>
</dbReference>
<dbReference type="GeneID" id="56695"/>
<dbReference type="KEGG" id="mmu:56695"/>
<dbReference type="UCSC" id="uc007bls.1">
    <molecule id="Q69ZP3-2"/>
    <property type="organism name" value="mouse"/>
</dbReference>
<dbReference type="UCSC" id="uc007blt.1">
    <molecule id="Q69ZP3-1"/>
    <property type="organism name" value="mouse"/>
</dbReference>
<dbReference type="UCSC" id="uc007blu.1">
    <molecule id="Q69ZP3-3"/>
    <property type="organism name" value="mouse"/>
</dbReference>
<dbReference type="UCSC" id="uc007blw.1">
    <molecule id="Q69ZP3-4"/>
    <property type="organism name" value="mouse"/>
</dbReference>
<dbReference type="AGR" id="MGI:1930773"/>
<dbReference type="CTD" id="25953"/>
<dbReference type="MGI" id="MGI:1930773">
    <property type="gene designation" value="Pnkd"/>
</dbReference>
<dbReference type="VEuPathDB" id="HostDB:ENSMUSG00000026179"/>
<dbReference type="eggNOG" id="KOG0813">
    <property type="taxonomic scope" value="Eukaryota"/>
</dbReference>
<dbReference type="GeneTree" id="ENSGT00940000158887"/>
<dbReference type="HOGENOM" id="CLU_030571_4_3_1"/>
<dbReference type="InParanoid" id="Q69ZP3"/>
<dbReference type="OMA" id="CVWPGMR"/>
<dbReference type="OrthoDB" id="32047at9989"/>
<dbReference type="PhylomeDB" id="Q69ZP3"/>
<dbReference type="TreeFam" id="TF105273"/>
<dbReference type="BioGRID-ORCS" id="56695">
    <property type="hits" value="4 hits in 74 CRISPR screens"/>
</dbReference>
<dbReference type="CD-CODE" id="CE726F99">
    <property type="entry name" value="Postsynaptic density"/>
</dbReference>
<dbReference type="ChiTaRS" id="Pnkd">
    <property type="organism name" value="mouse"/>
</dbReference>
<dbReference type="PRO" id="PR:Q69ZP3"/>
<dbReference type="Proteomes" id="UP000000589">
    <property type="component" value="Chromosome 1"/>
</dbReference>
<dbReference type="RNAct" id="Q69ZP3">
    <property type="molecule type" value="protein"/>
</dbReference>
<dbReference type="Bgee" id="ENSMUSG00000026179">
    <property type="expression patterns" value="Expressed in embryonic brain and 230 other cell types or tissues"/>
</dbReference>
<dbReference type="ExpressionAtlas" id="Q69ZP3">
    <property type="expression patterns" value="baseline and differential"/>
</dbReference>
<dbReference type="GO" id="GO:0016020">
    <property type="term" value="C:membrane"/>
    <property type="evidence" value="ECO:0000266"/>
    <property type="project" value="MGI"/>
</dbReference>
<dbReference type="GO" id="GO:0005739">
    <property type="term" value="C:mitochondrion"/>
    <property type="evidence" value="ECO:0007005"/>
    <property type="project" value="MGI"/>
</dbReference>
<dbReference type="GO" id="GO:0005634">
    <property type="term" value="C:nucleus"/>
    <property type="evidence" value="ECO:0007669"/>
    <property type="project" value="UniProtKB-KW"/>
</dbReference>
<dbReference type="GO" id="GO:0005886">
    <property type="term" value="C:plasma membrane"/>
    <property type="evidence" value="ECO:0007669"/>
    <property type="project" value="UniProtKB-SubCell"/>
</dbReference>
<dbReference type="GO" id="GO:0099523">
    <property type="term" value="C:presynaptic cytosol"/>
    <property type="evidence" value="ECO:0000314"/>
    <property type="project" value="SynGO"/>
</dbReference>
<dbReference type="GO" id="GO:0004416">
    <property type="term" value="F:hydroxyacylglutathione hydrolase activity"/>
    <property type="evidence" value="ECO:0007669"/>
    <property type="project" value="InterPro"/>
</dbReference>
<dbReference type="GO" id="GO:0046872">
    <property type="term" value="F:metal ion binding"/>
    <property type="evidence" value="ECO:0007669"/>
    <property type="project" value="UniProtKB-KW"/>
</dbReference>
<dbReference type="GO" id="GO:0019243">
    <property type="term" value="P:methylglyoxal catabolic process to D-lactate via S-lactoyl-glutathione"/>
    <property type="evidence" value="ECO:0007669"/>
    <property type="project" value="InterPro"/>
</dbReference>
<dbReference type="GO" id="GO:0046929">
    <property type="term" value="P:negative regulation of neurotransmitter secretion"/>
    <property type="evidence" value="ECO:0000316"/>
    <property type="project" value="MGI"/>
</dbReference>
<dbReference type="GO" id="GO:0050884">
    <property type="term" value="P:neuromuscular process controlling posture"/>
    <property type="evidence" value="ECO:0000315"/>
    <property type="project" value="MGI"/>
</dbReference>
<dbReference type="GO" id="GO:0042053">
    <property type="term" value="P:regulation of dopamine metabolic process"/>
    <property type="evidence" value="ECO:0000315"/>
    <property type="project" value="MGI"/>
</dbReference>
<dbReference type="GO" id="GO:0032225">
    <property type="term" value="P:regulation of synaptic transmission, dopaminergic"/>
    <property type="evidence" value="ECO:0000315"/>
    <property type="project" value="MGI"/>
</dbReference>
<dbReference type="CDD" id="cd07723">
    <property type="entry name" value="hydroxyacylglutathione_hydrolase_MBL-fold"/>
    <property type="match status" value="1"/>
</dbReference>
<dbReference type="FunFam" id="3.60.15.10:FF:000015">
    <property type="entry name" value="probable hydrolase PNKD isoform X1"/>
    <property type="match status" value="1"/>
</dbReference>
<dbReference type="Gene3D" id="3.60.15.10">
    <property type="entry name" value="Ribonuclease Z/Hydroxyacylglutathione hydrolase-like"/>
    <property type="match status" value="1"/>
</dbReference>
<dbReference type="HAMAP" id="MF_01374">
    <property type="entry name" value="Glyoxalase_2"/>
    <property type="match status" value="1"/>
</dbReference>
<dbReference type="InterPro" id="IPR035680">
    <property type="entry name" value="Clx_II_MBL"/>
</dbReference>
<dbReference type="InterPro" id="IPR032282">
    <property type="entry name" value="HAGH_C"/>
</dbReference>
<dbReference type="InterPro" id="IPR017782">
    <property type="entry name" value="Hydroxyacylglutathione_Hdrlase"/>
</dbReference>
<dbReference type="InterPro" id="IPR001279">
    <property type="entry name" value="Metallo-B-lactamas"/>
</dbReference>
<dbReference type="InterPro" id="IPR036866">
    <property type="entry name" value="RibonucZ/Hydroxyglut_hydro"/>
</dbReference>
<dbReference type="NCBIfam" id="TIGR03413">
    <property type="entry name" value="GSH_gloB"/>
    <property type="match status" value="1"/>
</dbReference>
<dbReference type="PANTHER" id="PTHR11935">
    <property type="entry name" value="BETA LACTAMASE DOMAIN"/>
    <property type="match status" value="1"/>
</dbReference>
<dbReference type="PANTHER" id="PTHR11935:SF116">
    <property type="entry name" value="HYDROLASE PNKD-RELATED"/>
    <property type="match status" value="1"/>
</dbReference>
<dbReference type="Pfam" id="PF16123">
    <property type="entry name" value="HAGH_C"/>
    <property type="match status" value="1"/>
</dbReference>
<dbReference type="Pfam" id="PF00753">
    <property type="entry name" value="Lactamase_B"/>
    <property type="match status" value="1"/>
</dbReference>
<dbReference type="SMART" id="SM00849">
    <property type="entry name" value="Lactamase_B"/>
    <property type="match status" value="1"/>
</dbReference>
<dbReference type="SUPFAM" id="SSF56281">
    <property type="entry name" value="Metallo-hydrolase/oxidoreductase"/>
    <property type="match status" value="1"/>
</dbReference>
<proteinExistence type="evidence at protein level"/>
<reference key="1">
    <citation type="journal article" date="2004" name="World J. Gastroenterol.">
        <title>Transactivating effect of hepatitis C virus core protein: a suppression subtractive hybridization study.</title>
        <authorList>
            <person name="Liu M."/>
            <person name="Liu Y."/>
            <person name="Cheng J."/>
            <person name="Zhang S.-L."/>
            <person name="Wang L."/>
            <person name="Shao Q."/>
            <person name="Zhang J."/>
            <person name="Yang Q."/>
        </authorList>
    </citation>
    <scope>NUCLEOTIDE SEQUENCE [GENOMIC DNA / MRNA] (ISOFORM 2)</scope>
    <scope>INDUCTION</scope>
</reference>
<reference key="2">
    <citation type="submission" date="2000-04" db="EMBL/GenBank/DDBJ databases">
        <title>Isolation of full-length cDNA clones from mouse brain cDNA library made by oligo-capping method.</title>
        <authorList>
            <person name="Osada N."/>
            <person name="Kusuda J."/>
            <person name="Tanuma R."/>
            <person name="Ito A."/>
            <person name="Hirata M."/>
            <person name="Sugano S."/>
            <person name="Hashimoto K."/>
        </authorList>
    </citation>
    <scope>NUCLEOTIDE SEQUENCE [LARGE SCALE MRNA] (ISOFORM 4)</scope>
    <source>
        <strain>C57BL/6J</strain>
        <tissue>Brain</tissue>
    </source>
</reference>
<reference key="3">
    <citation type="submission" date="2000-10" db="EMBL/GenBank/DDBJ databases">
        <title>Cloning of FKSG19, a novel gene expressed in ovarian tumour tissue.</title>
        <authorList>
            <person name="Wang Y.-G."/>
            <person name="Gong L."/>
        </authorList>
    </citation>
    <scope>NUCLEOTIDE SEQUENCE [MRNA] (ISOFORM 2)</scope>
</reference>
<reference key="4">
    <citation type="submission" date="2003-05" db="EMBL/GenBank/DDBJ databases">
        <title>Cloning and functional analysis of Mus musculus myofibrillogenesis regulator 1 (MR-1).</title>
        <authorList>
            <person name="Hu Y."/>
            <person name="Li T."/>
            <person name="Wang Y."/>
        </authorList>
    </citation>
    <scope>NUCLEOTIDE SEQUENCE [MRNA] (ISOFORM 2)</scope>
    <source>
        <strain>C57BL/6J</strain>
        <tissue>Spleen</tissue>
    </source>
</reference>
<reference key="5">
    <citation type="journal article" date="2004" name="DNA Res.">
        <title>Prediction of the coding sequences of mouse homologues of KIAA gene: IV. The complete nucleotide sequences of 500 mouse KIAA-homologous cDNAs identified by screening of terminal sequences of cDNA clones randomly sampled from size-fractionated libraries.</title>
        <authorList>
            <person name="Okazaki N."/>
            <person name="Kikuno R."/>
            <person name="Ohara R."/>
            <person name="Inamoto S."/>
            <person name="Koseki H."/>
            <person name="Hiraoka S."/>
            <person name="Saga Y."/>
            <person name="Seino S."/>
            <person name="Nishimura M."/>
            <person name="Kaisho T."/>
            <person name="Hoshino K."/>
            <person name="Kitamura H."/>
            <person name="Nagase T."/>
            <person name="Ohara O."/>
            <person name="Koga H."/>
        </authorList>
    </citation>
    <scope>NUCLEOTIDE SEQUENCE [LARGE SCALE MRNA] (ISOFORM 1)</scope>
    <source>
        <tissue>Pancreatic islet</tissue>
    </source>
</reference>
<reference key="6">
    <citation type="journal article" date="2005" name="Science">
        <title>The transcriptional landscape of the mammalian genome.</title>
        <authorList>
            <person name="Carninci P."/>
            <person name="Kasukawa T."/>
            <person name="Katayama S."/>
            <person name="Gough J."/>
            <person name="Frith M.C."/>
            <person name="Maeda N."/>
            <person name="Oyama R."/>
            <person name="Ravasi T."/>
            <person name="Lenhard B."/>
            <person name="Wells C."/>
            <person name="Kodzius R."/>
            <person name="Shimokawa K."/>
            <person name="Bajic V.B."/>
            <person name="Brenner S.E."/>
            <person name="Batalov S."/>
            <person name="Forrest A.R."/>
            <person name="Zavolan M."/>
            <person name="Davis M.J."/>
            <person name="Wilming L.G."/>
            <person name="Aidinis V."/>
            <person name="Allen J.E."/>
            <person name="Ambesi-Impiombato A."/>
            <person name="Apweiler R."/>
            <person name="Aturaliya R.N."/>
            <person name="Bailey T.L."/>
            <person name="Bansal M."/>
            <person name="Baxter L."/>
            <person name="Beisel K.W."/>
            <person name="Bersano T."/>
            <person name="Bono H."/>
            <person name="Chalk A.M."/>
            <person name="Chiu K.P."/>
            <person name="Choudhary V."/>
            <person name="Christoffels A."/>
            <person name="Clutterbuck D.R."/>
            <person name="Crowe M.L."/>
            <person name="Dalla E."/>
            <person name="Dalrymple B.P."/>
            <person name="de Bono B."/>
            <person name="Della Gatta G."/>
            <person name="di Bernardo D."/>
            <person name="Down T."/>
            <person name="Engstrom P."/>
            <person name="Fagiolini M."/>
            <person name="Faulkner G."/>
            <person name="Fletcher C.F."/>
            <person name="Fukushima T."/>
            <person name="Furuno M."/>
            <person name="Futaki S."/>
            <person name="Gariboldi M."/>
            <person name="Georgii-Hemming P."/>
            <person name="Gingeras T.R."/>
            <person name="Gojobori T."/>
            <person name="Green R.E."/>
            <person name="Gustincich S."/>
            <person name="Harbers M."/>
            <person name="Hayashi Y."/>
            <person name="Hensch T.K."/>
            <person name="Hirokawa N."/>
            <person name="Hill D."/>
            <person name="Huminiecki L."/>
            <person name="Iacono M."/>
            <person name="Ikeo K."/>
            <person name="Iwama A."/>
            <person name="Ishikawa T."/>
            <person name="Jakt M."/>
            <person name="Kanapin A."/>
            <person name="Katoh M."/>
            <person name="Kawasawa Y."/>
            <person name="Kelso J."/>
            <person name="Kitamura H."/>
            <person name="Kitano H."/>
            <person name="Kollias G."/>
            <person name="Krishnan S.P."/>
            <person name="Kruger A."/>
            <person name="Kummerfeld S.K."/>
            <person name="Kurochkin I.V."/>
            <person name="Lareau L.F."/>
            <person name="Lazarevic D."/>
            <person name="Lipovich L."/>
            <person name="Liu J."/>
            <person name="Liuni S."/>
            <person name="McWilliam S."/>
            <person name="Madan Babu M."/>
            <person name="Madera M."/>
            <person name="Marchionni L."/>
            <person name="Matsuda H."/>
            <person name="Matsuzawa S."/>
            <person name="Miki H."/>
            <person name="Mignone F."/>
            <person name="Miyake S."/>
            <person name="Morris K."/>
            <person name="Mottagui-Tabar S."/>
            <person name="Mulder N."/>
            <person name="Nakano N."/>
            <person name="Nakauchi H."/>
            <person name="Ng P."/>
            <person name="Nilsson R."/>
            <person name="Nishiguchi S."/>
            <person name="Nishikawa S."/>
            <person name="Nori F."/>
            <person name="Ohara O."/>
            <person name="Okazaki Y."/>
            <person name="Orlando V."/>
            <person name="Pang K.C."/>
            <person name="Pavan W.J."/>
            <person name="Pavesi G."/>
            <person name="Pesole G."/>
            <person name="Petrovsky N."/>
            <person name="Piazza S."/>
            <person name="Reed J."/>
            <person name="Reid J.F."/>
            <person name="Ring B.Z."/>
            <person name="Ringwald M."/>
            <person name="Rost B."/>
            <person name="Ruan Y."/>
            <person name="Salzberg S.L."/>
            <person name="Sandelin A."/>
            <person name="Schneider C."/>
            <person name="Schoenbach C."/>
            <person name="Sekiguchi K."/>
            <person name="Semple C.A."/>
            <person name="Seno S."/>
            <person name="Sessa L."/>
            <person name="Sheng Y."/>
            <person name="Shibata Y."/>
            <person name="Shimada H."/>
            <person name="Shimada K."/>
            <person name="Silva D."/>
            <person name="Sinclair B."/>
            <person name="Sperling S."/>
            <person name="Stupka E."/>
            <person name="Sugiura K."/>
            <person name="Sultana R."/>
            <person name="Takenaka Y."/>
            <person name="Taki K."/>
            <person name="Tammoja K."/>
            <person name="Tan S.L."/>
            <person name="Tang S."/>
            <person name="Taylor M.S."/>
            <person name="Tegner J."/>
            <person name="Teichmann S.A."/>
            <person name="Ueda H.R."/>
            <person name="van Nimwegen E."/>
            <person name="Verardo R."/>
            <person name="Wei C.L."/>
            <person name="Yagi K."/>
            <person name="Yamanishi H."/>
            <person name="Zabarovsky E."/>
            <person name="Zhu S."/>
            <person name="Zimmer A."/>
            <person name="Hide W."/>
            <person name="Bult C."/>
            <person name="Grimmond S.M."/>
            <person name="Teasdale R.D."/>
            <person name="Liu E.T."/>
            <person name="Brusic V."/>
            <person name="Quackenbush J."/>
            <person name="Wahlestedt C."/>
            <person name="Mattick J.S."/>
            <person name="Hume D.A."/>
            <person name="Kai C."/>
            <person name="Sasaki D."/>
            <person name="Tomaru Y."/>
            <person name="Fukuda S."/>
            <person name="Kanamori-Katayama M."/>
            <person name="Suzuki M."/>
            <person name="Aoki J."/>
            <person name="Arakawa T."/>
            <person name="Iida J."/>
            <person name="Imamura K."/>
            <person name="Itoh M."/>
            <person name="Kato T."/>
            <person name="Kawaji H."/>
            <person name="Kawagashira N."/>
            <person name="Kawashima T."/>
            <person name="Kojima M."/>
            <person name="Kondo S."/>
            <person name="Konno H."/>
            <person name="Nakano K."/>
            <person name="Ninomiya N."/>
            <person name="Nishio T."/>
            <person name="Okada M."/>
            <person name="Plessy C."/>
            <person name="Shibata K."/>
            <person name="Shiraki T."/>
            <person name="Suzuki S."/>
            <person name="Tagami M."/>
            <person name="Waki K."/>
            <person name="Watahiki A."/>
            <person name="Okamura-Oho Y."/>
            <person name="Suzuki H."/>
            <person name="Kawai J."/>
            <person name="Hayashizaki Y."/>
        </authorList>
    </citation>
    <scope>NUCLEOTIDE SEQUENCE [LARGE SCALE MRNA] (ISOFORM 2)</scope>
    <scope>NUCLEOTIDE SEQUENCE [LARGE SCALE MRNA] (PARTIAL ISOFORM 4)</scope>
    <source>
        <strain>C57BL/6J</strain>
        <tissue>Aorta</tissue>
        <tissue>Tongue</tissue>
    </source>
</reference>
<reference key="7">
    <citation type="journal article" date="2004" name="Genome Res.">
        <title>The status, quality, and expansion of the NIH full-length cDNA project: the Mammalian Gene Collection (MGC).</title>
        <authorList>
            <consortium name="The MGC Project Team"/>
        </authorList>
    </citation>
    <scope>NUCLEOTIDE SEQUENCE [LARGE SCALE MRNA] (ISOFORMS 2 AND 3)</scope>
    <source>
        <strain>C57BL/6J</strain>
        <strain>FVB/N</strain>
        <tissue>Brain</tissue>
        <tissue>Mammary tumor</tissue>
    </source>
</reference>
<reference key="8">
    <citation type="journal article" date="2004" name="Hum. Mol. Genet.">
        <title>The gene for paroxysmal non-kinesigenic dyskinesia encodes an enzyme in a stress response pathway.</title>
        <authorList>
            <person name="Lee H.-Y."/>
            <person name="Xu Y."/>
            <person name="Huang Y."/>
            <person name="Ahn A.H."/>
            <person name="Auburger G.W."/>
            <person name="Pandolfo M."/>
            <person name="Kwiecinski H."/>
            <person name="Grimes D.A."/>
            <person name="Lang A.E."/>
            <person name="Nielsen J.E."/>
            <person name="Averyanov Y."/>
            <person name="Servidei S."/>
            <person name="Friedman A."/>
            <person name="Van Bogaert P."/>
            <person name="Abramowicz M.J."/>
            <person name="Bruno M.K."/>
            <person name="Sorensen B.F."/>
            <person name="Tang L."/>
            <person name="Fu Y.-H."/>
            <person name="Ptacek L.J."/>
        </authorList>
    </citation>
    <scope>TISSUE SPECIFICITY</scope>
</reference>
<reference key="9">
    <citation type="journal article" date="2007" name="Hypertension">
        <title>Overexpression of myofibrillogenesis regulator-1 aggravates cardiac hypertrophy induced by angiotensin II in mice.</title>
        <authorList>
            <person name="Li H.-L."/>
            <person name="She Z.-G."/>
            <person name="Li T.-B."/>
            <person name="Wang A.-B."/>
            <person name="Yang Q."/>
            <person name="Wei Y.-S."/>
            <person name="Wang Y.-G."/>
            <person name="Liu D.-P."/>
        </authorList>
    </citation>
    <scope>TRANSGENIC MICE</scope>
    <scope>FUNCTION</scope>
</reference>
<reference key="10">
    <citation type="journal article" date="2010" name="Cell">
        <title>A tissue-specific atlas of mouse protein phosphorylation and expression.</title>
        <authorList>
            <person name="Huttlin E.L."/>
            <person name="Jedrychowski M.P."/>
            <person name="Elias J.E."/>
            <person name="Goswami T."/>
            <person name="Rad R."/>
            <person name="Beausoleil S.A."/>
            <person name="Villen J."/>
            <person name="Haas W."/>
            <person name="Sowa M.E."/>
            <person name="Gygi S.P."/>
        </authorList>
    </citation>
    <scope>IDENTIFICATION BY MASS SPECTROMETRY [LARGE SCALE ANALYSIS]</scope>
    <source>
        <tissue>Brain</tissue>
        <tissue>Brown adipose tissue</tissue>
        <tissue>Heart</tissue>
        <tissue>Kidney</tissue>
        <tissue>Liver</tissue>
        <tissue>Spleen</tissue>
        <tissue>Testis</tissue>
    </source>
</reference>
<protein>
    <recommendedName>
        <fullName evidence="3">Probable thioesterase PNKD</fullName>
        <ecNumber evidence="3">3.1.2.-</ecNumber>
    </recommendedName>
    <alternativeName>
        <fullName>Myofibrillogenesis regulator 1</fullName>
        <shortName>MR-1</shortName>
    </alternativeName>
    <alternativeName>
        <fullName>Paroxysmal nonkinesiogenic dyskinesia protein</fullName>
    </alternativeName>
</protein>
<accession>Q69ZP3</accession>
<accession>Q3TLE6</accession>
<accession>Q6PD45</accession>
<accession>Q8BRV8</accession>
<accession>Q920D4</accession>
<accession>Q9CSF5</accession>
<accession>Q9D765</accession>
<accession>Q9JJA3</accession>
<evidence type="ECO:0000250" key="1"/>
<evidence type="ECO:0000250" key="2">
    <source>
        <dbReference type="UniProtKB" id="Q16775"/>
    </source>
</evidence>
<evidence type="ECO:0000250" key="3">
    <source>
        <dbReference type="UniProtKB" id="Q8N490"/>
    </source>
</evidence>
<evidence type="ECO:0000256" key="4">
    <source>
        <dbReference type="SAM" id="MobiDB-lite"/>
    </source>
</evidence>
<evidence type="ECO:0000269" key="5">
    <source>
    </source>
</evidence>
<evidence type="ECO:0000269" key="6">
    <source>
    </source>
</evidence>
<evidence type="ECO:0000303" key="7">
    <source>
    </source>
</evidence>
<evidence type="ECO:0000303" key="8">
    <source>
    </source>
</evidence>
<evidence type="ECO:0000303" key="9">
    <source>
    </source>
</evidence>
<evidence type="ECO:0000303" key="10">
    <source ref="2"/>
</evidence>
<evidence type="ECO:0000303" key="11">
    <source ref="3"/>
</evidence>
<evidence type="ECO:0000303" key="12">
    <source ref="4"/>
</evidence>
<evidence type="ECO:0000305" key="13"/>
<organism>
    <name type="scientific">Mus musculus</name>
    <name type="common">Mouse</name>
    <dbReference type="NCBI Taxonomy" id="10090"/>
    <lineage>
        <taxon>Eukaryota</taxon>
        <taxon>Metazoa</taxon>
        <taxon>Chordata</taxon>
        <taxon>Craniata</taxon>
        <taxon>Vertebrata</taxon>
        <taxon>Euteleostomi</taxon>
        <taxon>Mammalia</taxon>
        <taxon>Eutheria</taxon>
        <taxon>Euarchontoglires</taxon>
        <taxon>Glires</taxon>
        <taxon>Rodentia</taxon>
        <taxon>Myomorpha</taxon>
        <taxon>Muroidea</taxon>
        <taxon>Muridae</taxon>
        <taxon>Murinae</taxon>
        <taxon>Mus</taxon>
        <taxon>Mus</taxon>
    </lineage>
</organism>
<sequence length="385" mass="43017">MAAVVAATALKGRGARNARVLRGILSGATANKASQNRTRALQSHSSPECKEEPEPLSPELEYIPRKRGKNPMKAVGLAWYSLYTRTWLGYLFYRQQLRRARNRYPKGHSKTQPRLFNGVKVLPIPVLSDNYSYLIIDTQAGLAVAVDPSDPRAVQASIEKERVNLVAILCTHKHWDHSGGNRDLSRRHRDCRVYGSPQDGIPYLTHPLCHQDVVSVGRLQIRALATPGHTQGHLVYLLDGEPYKGPSCLFSGDLLFLSGCGRTFEGTAETMLSSLDTVLDLGDDTLLWPGHEYAEENLGFAGVVEPENLARERKMQWVQRQRMERKSTCPSTLGEERAYNPFLRTHCLELQEALGPGPGPTSDDGCSRAQLLEELRRLKDMHKSK</sequence>